<name>UNG_DICDI</name>
<accession>P53766</accession>
<accession>Q54YQ3</accession>
<proteinExistence type="evidence at transcript level"/>
<reference key="1">
    <citation type="journal article" date="2005" name="Nature">
        <title>The genome of the social amoeba Dictyostelium discoideum.</title>
        <authorList>
            <person name="Eichinger L."/>
            <person name="Pachebat J.A."/>
            <person name="Gloeckner G."/>
            <person name="Rajandream M.A."/>
            <person name="Sucgang R."/>
            <person name="Berriman M."/>
            <person name="Song J."/>
            <person name="Olsen R."/>
            <person name="Szafranski K."/>
            <person name="Xu Q."/>
            <person name="Tunggal B."/>
            <person name="Kummerfeld S."/>
            <person name="Madera M."/>
            <person name="Konfortov B.A."/>
            <person name="Rivero F."/>
            <person name="Bankier A.T."/>
            <person name="Lehmann R."/>
            <person name="Hamlin N."/>
            <person name="Davies R."/>
            <person name="Gaudet P."/>
            <person name="Fey P."/>
            <person name="Pilcher K."/>
            <person name="Chen G."/>
            <person name="Saunders D."/>
            <person name="Sodergren E.J."/>
            <person name="Davis P."/>
            <person name="Kerhornou A."/>
            <person name="Nie X."/>
            <person name="Hall N."/>
            <person name="Anjard C."/>
            <person name="Hemphill L."/>
            <person name="Bason N."/>
            <person name="Farbrother P."/>
            <person name="Desany B."/>
            <person name="Just E."/>
            <person name="Morio T."/>
            <person name="Rost R."/>
            <person name="Churcher C.M."/>
            <person name="Cooper J."/>
            <person name="Haydock S."/>
            <person name="van Driessche N."/>
            <person name="Cronin A."/>
            <person name="Goodhead I."/>
            <person name="Muzny D.M."/>
            <person name="Mourier T."/>
            <person name="Pain A."/>
            <person name="Lu M."/>
            <person name="Harper D."/>
            <person name="Lindsay R."/>
            <person name="Hauser H."/>
            <person name="James K.D."/>
            <person name="Quiles M."/>
            <person name="Madan Babu M."/>
            <person name="Saito T."/>
            <person name="Buchrieser C."/>
            <person name="Wardroper A."/>
            <person name="Felder M."/>
            <person name="Thangavelu M."/>
            <person name="Johnson D."/>
            <person name="Knights A."/>
            <person name="Loulseged H."/>
            <person name="Mungall K.L."/>
            <person name="Oliver K."/>
            <person name="Price C."/>
            <person name="Quail M.A."/>
            <person name="Urushihara H."/>
            <person name="Hernandez J."/>
            <person name="Rabbinowitsch E."/>
            <person name="Steffen D."/>
            <person name="Sanders M."/>
            <person name="Ma J."/>
            <person name="Kohara Y."/>
            <person name="Sharp S."/>
            <person name="Simmonds M.N."/>
            <person name="Spiegler S."/>
            <person name="Tivey A."/>
            <person name="Sugano S."/>
            <person name="White B."/>
            <person name="Walker D."/>
            <person name="Woodward J.R."/>
            <person name="Winckler T."/>
            <person name="Tanaka Y."/>
            <person name="Shaulsky G."/>
            <person name="Schleicher M."/>
            <person name="Weinstock G.M."/>
            <person name="Rosenthal A."/>
            <person name="Cox E.C."/>
            <person name="Chisholm R.L."/>
            <person name="Gibbs R.A."/>
            <person name="Loomis W.F."/>
            <person name="Platzer M."/>
            <person name="Kay R.R."/>
            <person name="Williams J.G."/>
            <person name="Dear P.H."/>
            <person name="Noegel A.A."/>
            <person name="Barrell B.G."/>
            <person name="Kuspa A."/>
        </authorList>
    </citation>
    <scope>NUCLEOTIDE SEQUENCE [LARGE SCALE GENOMIC DNA]</scope>
    <source>
        <strain>AX4</strain>
    </source>
</reference>
<reference key="2">
    <citation type="submission" date="1995-09" db="EMBL/GenBank/DDBJ databases">
        <title>Uracil-DNA glycosylase from Dictyostelium discoideum.</title>
        <authorList>
            <person name="Guyer R.B."/>
            <person name="Deering R.A."/>
        </authorList>
    </citation>
    <scope>NUCLEOTIDE SEQUENCE [MRNA] OF 90-346</scope>
</reference>
<sequence>MSGKITDFFEKKTTTTIDEAENKDNDKELTSTTTTTTTTSTTSKKKVAAAPKKKAAVASKKRKHESSDEETDKEEQQNDDDDDGEEKVENNNNNKKLKNEEKSEEINSTITDNNYYDDIENYFTDKQWKEALSGEFGKAYFKKMITQLNKRYSSKEKPIYPPKNEIFSAFNYAHLEDVKVVIIGQDPYHGKGQAHGLSFSVKKGVSPPPSLINIYKELETDIEGFKRPLKNGFLEPWARQGVFLLNAVLTVEEATPNSHKDFGWADFTDAVLKILSKQDQPIVFILWGGFAQKKEKLFTNKNHLVLKSGHPSPLSIKHFIGCKHFSKSNEFLKSKGIEEIDWKITE</sequence>
<dbReference type="EC" id="3.2.2.27" evidence="1"/>
<dbReference type="EMBL" id="AAFI02000023">
    <property type="protein sequence ID" value="EAL68111.1"/>
    <property type="molecule type" value="Genomic_DNA"/>
</dbReference>
<dbReference type="EMBL" id="U32866">
    <property type="protein sequence ID" value="AAA75334.1"/>
    <property type="molecule type" value="mRNA"/>
</dbReference>
<dbReference type="RefSeq" id="XP_642149.1">
    <property type="nucleotide sequence ID" value="XM_637057.1"/>
</dbReference>
<dbReference type="SMR" id="P53766"/>
<dbReference type="FunCoup" id="P53766">
    <property type="interactions" value="486"/>
</dbReference>
<dbReference type="STRING" id="44689.P53766"/>
<dbReference type="PaxDb" id="44689-DDB0214910"/>
<dbReference type="EnsemblProtists" id="EAL68111">
    <property type="protein sequence ID" value="EAL68111"/>
    <property type="gene ID" value="DDB_G0277877"/>
</dbReference>
<dbReference type="GeneID" id="8621357"/>
<dbReference type="KEGG" id="ddi:DDB_G0277877"/>
<dbReference type="dictyBase" id="DDB_G0277877">
    <property type="gene designation" value="uglA"/>
</dbReference>
<dbReference type="VEuPathDB" id="AmoebaDB:DDB_G0277877"/>
<dbReference type="eggNOG" id="KOG2994">
    <property type="taxonomic scope" value="Eukaryota"/>
</dbReference>
<dbReference type="HOGENOM" id="CLU_032162_0_0_1"/>
<dbReference type="InParanoid" id="P53766"/>
<dbReference type="OMA" id="INLHCSH"/>
<dbReference type="PhylomeDB" id="P53766"/>
<dbReference type="Reactome" id="R-DDI-110329">
    <property type="pathway name" value="Cleavage of the damaged pyrimidine"/>
</dbReference>
<dbReference type="Reactome" id="R-DDI-110357">
    <property type="pathway name" value="Displacement of DNA glycosylase by APEX1"/>
</dbReference>
<dbReference type="PRO" id="PR:P53766"/>
<dbReference type="Proteomes" id="UP000002195">
    <property type="component" value="Chromosome 3"/>
</dbReference>
<dbReference type="GO" id="GO:0005739">
    <property type="term" value="C:mitochondrion"/>
    <property type="evidence" value="ECO:0000318"/>
    <property type="project" value="GO_Central"/>
</dbReference>
<dbReference type="GO" id="GO:0005634">
    <property type="term" value="C:nucleus"/>
    <property type="evidence" value="ECO:0000318"/>
    <property type="project" value="GO_Central"/>
</dbReference>
<dbReference type="GO" id="GO:0004844">
    <property type="term" value="F:uracil DNA N-glycosylase activity"/>
    <property type="evidence" value="ECO:0007669"/>
    <property type="project" value="UniProtKB-UniRule"/>
</dbReference>
<dbReference type="GO" id="GO:0097510">
    <property type="term" value="P:base-excision repair, AP site formation via deaminated base removal"/>
    <property type="evidence" value="ECO:0000318"/>
    <property type="project" value="GO_Central"/>
</dbReference>
<dbReference type="CDD" id="cd10027">
    <property type="entry name" value="UDG-F1-like"/>
    <property type="match status" value="1"/>
</dbReference>
<dbReference type="FunFam" id="3.40.470.10:FF:000001">
    <property type="entry name" value="Uracil-DNA glycosylase"/>
    <property type="match status" value="1"/>
</dbReference>
<dbReference type="Gene3D" id="3.40.470.10">
    <property type="entry name" value="Uracil-DNA glycosylase-like domain"/>
    <property type="match status" value="1"/>
</dbReference>
<dbReference type="HAMAP" id="MF_00148">
    <property type="entry name" value="UDG"/>
    <property type="match status" value="1"/>
</dbReference>
<dbReference type="InterPro" id="IPR002043">
    <property type="entry name" value="UDG_fam1"/>
</dbReference>
<dbReference type="InterPro" id="IPR018085">
    <property type="entry name" value="Ura-DNA_Glyclase_AS"/>
</dbReference>
<dbReference type="InterPro" id="IPR005122">
    <property type="entry name" value="Uracil-DNA_glycosylase-like"/>
</dbReference>
<dbReference type="InterPro" id="IPR036895">
    <property type="entry name" value="Uracil-DNA_glycosylase-like_sf"/>
</dbReference>
<dbReference type="NCBIfam" id="NF003588">
    <property type="entry name" value="PRK05254.1-1"/>
    <property type="match status" value="1"/>
</dbReference>
<dbReference type="NCBIfam" id="NF003589">
    <property type="entry name" value="PRK05254.1-2"/>
    <property type="match status" value="1"/>
</dbReference>
<dbReference type="NCBIfam" id="NF003591">
    <property type="entry name" value="PRK05254.1-4"/>
    <property type="match status" value="1"/>
</dbReference>
<dbReference type="NCBIfam" id="NF003592">
    <property type="entry name" value="PRK05254.1-5"/>
    <property type="match status" value="1"/>
</dbReference>
<dbReference type="NCBIfam" id="TIGR00628">
    <property type="entry name" value="ung"/>
    <property type="match status" value="1"/>
</dbReference>
<dbReference type="PANTHER" id="PTHR11264">
    <property type="entry name" value="URACIL-DNA GLYCOSYLASE"/>
    <property type="match status" value="1"/>
</dbReference>
<dbReference type="PANTHER" id="PTHR11264:SF0">
    <property type="entry name" value="URACIL-DNA GLYCOSYLASE"/>
    <property type="match status" value="1"/>
</dbReference>
<dbReference type="Pfam" id="PF03167">
    <property type="entry name" value="UDG"/>
    <property type="match status" value="1"/>
</dbReference>
<dbReference type="SMART" id="SM00986">
    <property type="entry name" value="UDG"/>
    <property type="match status" value="1"/>
</dbReference>
<dbReference type="SMART" id="SM00987">
    <property type="entry name" value="UreE_C"/>
    <property type="match status" value="1"/>
</dbReference>
<dbReference type="SUPFAM" id="SSF52141">
    <property type="entry name" value="Uracil-DNA glycosylase-like"/>
    <property type="match status" value="1"/>
</dbReference>
<dbReference type="PROSITE" id="PS00130">
    <property type="entry name" value="U_DNA_GLYCOSYLASE"/>
    <property type="match status" value="1"/>
</dbReference>
<feature type="chain" id="PRO_0000176172" description="Uracil-DNA glycosylase">
    <location>
        <begin position="1"/>
        <end position="346"/>
    </location>
</feature>
<feature type="region of interest" description="Disordered" evidence="2">
    <location>
        <begin position="1"/>
        <end position="105"/>
    </location>
</feature>
<feature type="compositionally biased region" description="Basic and acidic residues" evidence="2">
    <location>
        <begin position="20"/>
        <end position="29"/>
    </location>
</feature>
<feature type="compositionally biased region" description="Low complexity" evidence="2">
    <location>
        <begin position="30"/>
        <end position="42"/>
    </location>
</feature>
<feature type="compositionally biased region" description="Basic residues" evidence="2">
    <location>
        <begin position="43"/>
        <end position="64"/>
    </location>
</feature>
<feature type="compositionally biased region" description="Acidic residues" evidence="2">
    <location>
        <begin position="67"/>
        <end position="86"/>
    </location>
</feature>
<feature type="active site" description="Proton acceptor" evidence="1">
    <location>
        <position position="186"/>
    </location>
</feature>
<evidence type="ECO:0000255" key="1">
    <source>
        <dbReference type="HAMAP-Rule" id="MF_03166"/>
    </source>
</evidence>
<evidence type="ECO:0000256" key="2">
    <source>
        <dbReference type="SAM" id="MobiDB-lite"/>
    </source>
</evidence>
<gene>
    <name type="primary">uglA</name>
    <name type="ORF">DDB_G0277877</name>
</gene>
<protein>
    <recommendedName>
        <fullName evidence="1">Uracil-DNA glycosylase</fullName>
        <shortName evidence="1">UDG</shortName>
        <ecNumber evidence="1">3.2.2.27</ecNumber>
    </recommendedName>
</protein>
<organism>
    <name type="scientific">Dictyostelium discoideum</name>
    <name type="common">Social amoeba</name>
    <dbReference type="NCBI Taxonomy" id="44689"/>
    <lineage>
        <taxon>Eukaryota</taxon>
        <taxon>Amoebozoa</taxon>
        <taxon>Evosea</taxon>
        <taxon>Eumycetozoa</taxon>
        <taxon>Dictyostelia</taxon>
        <taxon>Dictyosteliales</taxon>
        <taxon>Dictyosteliaceae</taxon>
        <taxon>Dictyostelium</taxon>
    </lineage>
</organism>
<keyword id="KW-0227">DNA damage</keyword>
<keyword id="KW-0234">DNA repair</keyword>
<keyword id="KW-0378">Hydrolase</keyword>
<keyword id="KW-0496">Mitochondrion</keyword>
<keyword id="KW-0539">Nucleus</keyword>
<keyword id="KW-1185">Reference proteome</keyword>
<comment type="function">
    <text>Excises uracil residues from the DNA which can arise as a result of misincorporation of dUMP residues by DNA polymerase or due to deamination of cytosine.</text>
</comment>
<comment type="catalytic activity">
    <reaction evidence="1">
        <text>Hydrolyzes single-stranded DNA or mismatched double-stranded DNA and polynucleotides, releasing free uracil.</text>
        <dbReference type="EC" id="3.2.2.27"/>
    </reaction>
</comment>
<comment type="subcellular location">
    <subcellularLocation>
        <location evidence="1">Mitochondrion</location>
    </subcellularLocation>
    <subcellularLocation>
        <location evidence="1">Nucleus</location>
    </subcellularLocation>
</comment>
<comment type="similarity">
    <text evidence="1">Belongs to the uracil-DNA glycosylase (UDG) superfamily. UNG family.</text>
</comment>